<keyword id="KW-0067">ATP-binding</keyword>
<keyword id="KW-0115">cAMP biosynthesis</keyword>
<keyword id="KW-1003">Cell membrane</keyword>
<keyword id="KW-0963">Cytoplasm</keyword>
<keyword id="KW-0325">Glycoprotein</keyword>
<keyword id="KW-0456">Lyase</keyword>
<keyword id="KW-0460">Magnesium</keyword>
<keyword id="KW-0464">Manganese</keyword>
<keyword id="KW-0472">Membrane</keyword>
<keyword id="KW-0479">Metal-binding</keyword>
<keyword id="KW-0547">Nucleotide-binding</keyword>
<keyword id="KW-0597">Phosphoprotein</keyword>
<keyword id="KW-1185">Reference proteome</keyword>
<keyword id="KW-0677">Repeat</keyword>
<keyword id="KW-0812">Transmembrane</keyword>
<keyword id="KW-1133">Transmembrane helix</keyword>
<proteinExistence type="evidence at protein level"/>
<evidence type="ECO:0000250" key="1">
    <source>
        <dbReference type="UniProtKB" id="P26769"/>
    </source>
</evidence>
<evidence type="ECO:0000250" key="2">
    <source>
        <dbReference type="UniProtKB" id="P30803"/>
    </source>
</evidence>
<evidence type="ECO:0000250" key="3">
    <source>
        <dbReference type="UniProtKB" id="Q08462"/>
    </source>
</evidence>
<evidence type="ECO:0000255" key="4"/>
<evidence type="ECO:0000255" key="5">
    <source>
        <dbReference type="PROSITE-ProRule" id="PRU00099"/>
    </source>
</evidence>
<evidence type="ECO:0000305" key="6"/>
<sequence length="1090" mass="123270">MRRRRYLRDRAEAAAAAAAGGGEGLQRSRDWLYESYYCMSQQHPLIVFLLLIVMGACLALLAVFFALGLEVEDHVAFLITVPTALAIFFAIFILVCIESVFKKLLRVFSLVIWICLVAMGYLFMCFGGTVSAWDQVSFFLFIIFVVYTMLPFNMRDAIIASVLTSSSHTIVLSVYLSATPGAKEHLFWQILANVIIFICGNLAGAYHKHLMELALQQTYRDTCNCIKSRIKLEFEKRQQERLLLSLLPAHIAMEMKAEIIQRLQGPKAGQMENTNNFHNLYVKRHTNVSILYADIVGFTRLASDCSPGELVHMLNELFGKFDQIAKENECMRIKILGDCYYCVSGLPISLPNHAKNCVKMGLDMCEAIKKVRDATGVDINMRVGVHSGNVLCGVIGLQKWQYDVWSHDVTLANHMEAGGVPGRVHISSVTLEHLNGAYKVEEGDGEIRDPYLKQHLVKTYFVINPKGERRSPQHLFRPRHTLDGAKMRASVRMTRYLESWGAAKPFAHLHHRDSMTTENGKISTTDVPMGQHNFQNRTLRTKSQKKRFEEELNERMIQAIDGINAQKQWLKSEDIQRISLFFYNKNIEKEYRATALPAFKYYVTCACLIFLCIFIVQILVLPKTSILGFSFGAAFLSLIFILFVCFAGQLLQCSKKASASLLWLLKSSGIIANRPWPRISLTIVTTAIILTMAVFNMFFLSNSEETTLPTANASNANVSVPDNQTAILHARNLFFLPYFIYSCILGLISCSVFLRVNYELKMLIMMVALVGYNIILLHTHAHVLDAYSQVLFQRPGIWKDLKTMGSVSLSIFFITLLVLGRQSEYYCRLDFLWKNKFKKEREEIETMENLNRVLLENVLPAHVAEHFLARSLKNEELYHQSYDCVCVMFASIPDFKEFYTESDVNKEGLECLRLLNEIIADFDDLLSKPKFSGVEKIKTIGSTYMAATGLSAVPSQEHAQEPERQYMHIGTMVEFAYALVGKLDAINKHSFNDFKLRVGINHGPVIAGVIGAQKPQYDIWGNTVNVASRMDSTGVLDKIQVTEETSLILQTLGYTCTCRGIINVKGKGDLKTYFVNTEMSRSLSQSNLAS</sequence>
<accession>Q80TL1</accession>
<accession>Q8CFU6</accession>
<feature type="chain" id="PRO_0000195685" description="Adenylate cyclase type 2">
    <location>
        <begin position="1"/>
        <end position="1090"/>
    </location>
</feature>
<feature type="topological domain" description="Cytoplasmic" evidence="4">
    <location>
        <begin position="1"/>
        <end position="44"/>
    </location>
</feature>
<feature type="transmembrane region" description="Helical" evidence="4">
    <location>
        <begin position="45"/>
        <end position="65"/>
    </location>
</feature>
<feature type="transmembrane region" description="Helical" evidence="4">
    <location>
        <begin position="75"/>
        <end position="95"/>
    </location>
</feature>
<feature type="transmembrane region" description="Helical" evidence="4">
    <location>
        <begin position="107"/>
        <end position="127"/>
    </location>
</feature>
<feature type="transmembrane region" description="Helical" evidence="4">
    <location>
        <begin position="132"/>
        <end position="152"/>
    </location>
</feature>
<feature type="transmembrane region" description="Helical" evidence="4">
    <location>
        <begin position="157"/>
        <end position="177"/>
    </location>
</feature>
<feature type="transmembrane region" description="Helical" evidence="4">
    <location>
        <begin position="186"/>
        <end position="206"/>
    </location>
</feature>
<feature type="topological domain" description="Cytoplasmic" evidence="4">
    <location>
        <begin position="207"/>
        <end position="600"/>
    </location>
</feature>
<feature type="transmembrane region" description="Helical" evidence="4">
    <location>
        <begin position="601"/>
        <end position="621"/>
    </location>
</feature>
<feature type="transmembrane region" description="Helical" evidence="4">
    <location>
        <begin position="626"/>
        <end position="646"/>
    </location>
</feature>
<feature type="transmembrane region" description="Helical" evidence="4">
    <location>
        <begin position="679"/>
        <end position="699"/>
    </location>
</feature>
<feature type="transmembrane region" description="Helical" evidence="4">
    <location>
        <begin position="734"/>
        <end position="754"/>
    </location>
</feature>
<feature type="transmembrane region" description="Helical" evidence="4">
    <location>
        <begin position="763"/>
        <end position="783"/>
    </location>
</feature>
<feature type="transmembrane region" description="Helical" evidence="4">
    <location>
        <begin position="800"/>
        <end position="820"/>
    </location>
</feature>
<feature type="topological domain" description="Cytoplasmic" evidence="4">
    <location>
        <begin position="821"/>
        <end position="1090"/>
    </location>
</feature>
<feature type="region of interest" description="Interaction with GNAS" evidence="1">
    <location>
        <begin position="904"/>
        <end position="921"/>
    </location>
</feature>
<feature type="region of interest" description="Interaction with GNAS" evidence="1">
    <location>
        <begin position="989"/>
        <end position="992"/>
    </location>
</feature>
<feature type="binding site" evidence="2">
    <location>
        <begin position="294"/>
        <end position="299"/>
    </location>
    <ligand>
        <name>ATP</name>
        <dbReference type="ChEBI" id="CHEBI:30616"/>
    </ligand>
</feature>
<feature type="binding site" evidence="5">
    <location>
        <position position="294"/>
    </location>
    <ligand>
        <name>Mg(2+)</name>
        <dbReference type="ChEBI" id="CHEBI:18420"/>
        <label>1</label>
        <note>catalytic</note>
    </ligand>
</feature>
<feature type="binding site" evidence="5">
    <location>
        <position position="294"/>
    </location>
    <ligand>
        <name>Mg(2+)</name>
        <dbReference type="ChEBI" id="CHEBI:18420"/>
        <label>2</label>
        <note>catalytic</note>
    </ligand>
</feature>
<feature type="binding site" evidence="5">
    <location>
        <position position="295"/>
    </location>
    <ligand>
        <name>Mg(2+)</name>
        <dbReference type="ChEBI" id="CHEBI:18420"/>
        <label>2</label>
        <note>catalytic</note>
    </ligand>
</feature>
<feature type="binding site" evidence="2">
    <location>
        <begin position="336"/>
        <end position="338"/>
    </location>
    <ligand>
        <name>ATP</name>
        <dbReference type="ChEBI" id="CHEBI:30616"/>
    </ligand>
</feature>
<feature type="binding site" evidence="5">
    <location>
        <position position="338"/>
    </location>
    <ligand>
        <name>Mg(2+)</name>
        <dbReference type="ChEBI" id="CHEBI:18420"/>
        <label>1</label>
        <note>catalytic</note>
    </ligand>
</feature>
<feature type="binding site" evidence="5">
    <location>
        <position position="338"/>
    </location>
    <ligand>
        <name>Mg(2+)</name>
        <dbReference type="ChEBI" id="CHEBI:18420"/>
        <label>2</label>
        <note>catalytic</note>
    </ligand>
</feature>
<feature type="binding site" evidence="2">
    <location>
        <position position="382"/>
    </location>
    <ligand>
        <name>ATP</name>
        <dbReference type="ChEBI" id="CHEBI:30616"/>
    </ligand>
</feature>
<feature type="binding site" evidence="1">
    <location>
        <position position="938"/>
    </location>
    <ligand>
        <name>ATP</name>
        <dbReference type="ChEBI" id="CHEBI:30616"/>
    </ligand>
</feature>
<feature type="binding site" evidence="1">
    <location>
        <begin position="1018"/>
        <end position="1020"/>
    </location>
    <ligand>
        <name>ATP</name>
        <dbReference type="ChEBI" id="CHEBI:30616"/>
    </ligand>
</feature>
<feature type="binding site" evidence="1">
    <location>
        <begin position="1025"/>
        <end position="1029"/>
    </location>
    <ligand>
        <name>ATP</name>
        <dbReference type="ChEBI" id="CHEBI:30616"/>
    </ligand>
</feature>
<feature type="binding site" evidence="1">
    <location>
        <position position="1065"/>
    </location>
    <ligand>
        <name>ATP</name>
        <dbReference type="ChEBI" id="CHEBI:30616"/>
    </ligand>
</feature>
<feature type="modified residue" description="Phosphoserine; by PKC" evidence="1">
    <location>
        <position position="490"/>
    </location>
</feature>
<feature type="modified residue" description="Phosphoserine; by PKC" evidence="1">
    <location>
        <position position="543"/>
    </location>
</feature>
<feature type="glycosylation site" description="N-linked (GlcNAc...) asparagine" evidence="4">
    <location>
        <position position="712"/>
    </location>
</feature>
<feature type="glycosylation site" description="N-linked (GlcNAc...) asparagine" evidence="4">
    <location>
        <position position="717"/>
    </location>
</feature>
<feature type="glycosylation site" description="N-linked (GlcNAc...) asparagine" evidence="4">
    <location>
        <position position="723"/>
    </location>
</feature>
<organism>
    <name type="scientific">Mus musculus</name>
    <name type="common">Mouse</name>
    <dbReference type="NCBI Taxonomy" id="10090"/>
    <lineage>
        <taxon>Eukaryota</taxon>
        <taxon>Metazoa</taxon>
        <taxon>Chordata</taxon>
        <taxon>Craniata</taxon>
        <taxon>Vertebrata</taxon>
        <taxon>Euteleostomi</taxon>
        <taxon>Mammalia</taxon>
        <taxon>Eutheria</taxon>
        <taxon>Euarchontoglires</taxon>
        <taxon>Glires</taxon>
        <taxon>Rodentia</taxon>
        <taxon>Myomorpha</taxon>
        <taxon>Muroidea</taxon>
        <taxon>Muridae</taxon>
        <taxon>Murinae</taxon>
        <taxon>Mus</taxon>
        <taxon>Mus</taxon>
    </lineage>
</organism>
<name>ADCY2_MOUSE</name>
<reference key="1">
    <citation type="journal article" date="2003" name="DNA Res.">
        <title>Prediction of the coding sequences of mouse homologues of KIAA gene: II. The complete nucleotide sequences of 400 mouse KIAA-homologous cDNAs identified by screening of terminal sequences of cDNA clones randomly sampled from size-fractionated libraries.</title>
        <authorList>
            <person name="Okazaki N."/>
            <person name="Kikuno R."/>
            <person name="Ohara R."/>
            <person name="Inamoto S."/>
            <person name="Aizawa H."/>
            <person name="Yuasa S."/>
            <person name="Nakajima D."/>
            <person name="Nagase T."/>
            <person name="Ohara O."/>
            <person name="Koga H."/>
        </authorList>
    </citation>
    <scope>NUCLEOTIDE SEQUENCE [LARGE SCALE MRNA]</scope>
    <source>
        <tissue>Brain</tissue>
    </source>
</reference>
<reference key="2">
    <citation type="journal article" date="2004" name="Genome Res.">
        <title>The status, quality, and expansion of the NIH full-length cDNA project: the Mammalian Gene Collection (MGC).</title>
        <authorList>
            <consortium name="The MGC Project Team"/>
        </authorList>
    </citation>
    <scope>NUCLEOTIDE SEQUENCE [LARGE SCALE MRNA]</scope>
    <source>
        <tissue>Eye</tissue>
    </source>
</reference>
<reference key="3">
    <citation type="journal article" date="2010" name="Cell">
        <title>A tissue-specific atlas of mouse protein phosphorylation and expression.</title>
        <authorList>
            <person name="Huttlin E.L."/>
            <person name="Jedrychowski M.P."/>
            <person name="Elias J.E."/>
            <person name="Goswami T."/>
            <person name="Rad R."/>
            <person name="Beausoleil S.A."/>
            <person name="Villen J."/>
            <person name="Haas W."/>
            <person name="Sowa M.E."/>
            <person name="Gygi S.P."/>
        </authorList>
    </citation>
    <scope>IDENTIFICATION BY MASS SPECTROMETRY [LARGE SCALE ANALYSIS]</scope>
    <source>
        <tissue>Brain</tissue>
    </source>
</reference>
<gene>
    <name type="primary">Adcy2</name>
    <name type="synonym">Kiaa1060</name>
</gene>
<protein>
    <recommendedName>
        <fullName>Adenylate cyclase type 2</fullName>
        <ecNumber>4.6.1.1</ecNumber>
    </recommendedName>
    <alternativeName>
        <fullName>ATP pyrophosphate-lyase 2</fullName>
    </alternativeName>
    <alternativeName>
        <fullName>Adenylate cyclase type II</fullName>
    </alternativeName>
    <alternativeName>
        <fullName>Adenylyl cyclase 2</fullName>
    </alternativeName>
</protein>
<comment type="function">
    <text evidence="1">Catalyzes the formation of the signaling molecule cAMP in response to G-protein signaling. Down-stream signaling cascades mediate changes in gene expression patterns and lead to increased IL6 production. Functions in signaling cascades downstream of the muscarinic acetylcholine receptors.</text>
</comment>
<comment type="catalytic activity">
    <reaction evidence="1">
        <text>ATP = 3',5'-cyclic AMP + diphosphate</text>
        <dbReference type="Rhea" id="RHEA:15389"/>
        <dbReference type="ChEBI" id="CHEBI:30616"/>
        <dbReference type="ChEBI" id="CHEBI:33019"/>
        <dbReference type="ChEBI" id="CHEBI:58165"/>
        <dbReference type="EC" id="4.6.1.1"/>
    </reaction>
</comment>
<comment type="cofactor">
    <cofactor evidence="1">
        <name>Mg(2+)</name>
        <dbReference type="ChEBI" id="CHEBI:18420"/>
    </cofactor>
    <cofactor evidence="1">
        <name>Mn(2+)</name>
        <dbReference type="ChEBI" id="CHEBI:29035"/>
    </cofactor>
    <text evidence="1">Binds 2 magnesium ions per subunit. Is also active with manganese (in vitro).</text>
</comment>
<comment type="activity regulation">
    <text evidence="1 3">Activated by forskolin. Is not activated by calmodulin. Inhibited by calcium ions, already at micromolar concentration. Activated by the G protein alpha subunit GNAS. Activated by the G protein beta and gamma subunit complex. Phosphorylation by RAF1 results in its activation (By similarity). Phosphorylation by PKC activates the enzyme (By similarity).</text>
</comment>
<comment type="subunit">
    <text evidence="1 3">Interacts with RAF1 (By similarity). Interacts with GNAS. Interacts with the G protein beta and gamma subunit complex (By similarity).</text>
</comment>
<comment type="subcellular location">
    <subcellularLocation>
        <location evidence="1">Membrane</location>
        <topology evidence="1">Multi-pass membrane protein</topology>
    </subcellularLocation>
    <subcellularLocation>
        <location evidence="1">Cell membrane</location>
        <topology evidence="1">Multi-pass membrane protein</topology>
    </subcellularLocation>
    <subcellularLocation>
        <location evidence="3">Cytoplasm</location>
    </subcellularLocation>
</comment>
<comment type="domain">
    <text evidence="1">The protein contains two modules with six transmembrane helices each; both are required for catalytic activity. Isolated N-terminal or C-terminal guanylate cyclase domains have no catalytic activity, but when they are brought together, enzyme activity is restored. The active site is at the interface of the two domains. Both contribute substrate-binding residues, but the catalytic metal ions are bound exclusively via the N-terminal guanylate cyclase domain.</text>
</comment>
<comment type="PTM">
    <text evidence="3">Phosphorylated by RAF1.</text>
</comment>
<comment type="similarity">
    <text evidence="5">Belongs to the adenylyl cyclase class-4/guanylyl cyclase family.</text>
</comment>
<comment type="sequence caution" evidence="6">
    <conflict type="erroneous initiation">
        <sequence resource="EMBL-CDS" id="BAC65714"/>
    </conflict>
</comment>
<dbReference type="EC" id="4.6.1.1"/>
<dbReference type="EMBL" id="AK122432">
    <property type="protein sequence ID" value="BAC65714.1"/>
    <property type="status" value="ALT_INIT"/>
    <property type="molecule type" value="mRNA"/>
</dbReference>
<dbReference type="EMBL" id="BC037107">
    <property type="protein sequence ID" value="AAH37107.1"/>
    <property type="molecule type" value="mRNA"/>
</dbReference>
<dbReference type="SMR" id="Q80TL1"/>
<dbReference type="FunCoup" id="Q80TL1">
    <property type="interactions" value="161"/>
</dbReference>
<dbReference type="STRING" id="10090.ENSMUSP00000022013"/>
<dbReference type="GlyCosmos" id="Q80TL1">
    <property type="glycosylation" value="3 sites, No reported glycans"/>
</dbReference>
<dbReference type="GlyGen" id="Q80TL1">
    <property type="glycosylation" value="5 sites, 1 O-linked glycan (1 site)"/>
</dbReference>
<dbReference type="iPTMnet" id="Q80TL1"/>
<dbReference type="PhosphoSitePlus" id="Q80TL1"/>
<dbReference type="SwissPalm" id="Q80TL1"/>
<dbReference type="PaxDb" id="10090-ENSMUSP00000022013"/>
<dbReference type="ProteomicsDB" id="296066"/>
<dbReference type="AGR" id="MGI:99676"/>
<dbReference type="MGI" id="MGI:99676">
    <property type="gene designation" value="Adcy2"/>
</dbReference>
<dbReference type="eggNOG" id="KOG3619">
    <property type="taxonomic scope" value="Eukaryota"/>
</dbReference>
<dbReference type="InParanoid" id="Q80TL1"/>
<dbReference type="PhylomeDB" id="Q80TL1"/>
<dbReference type="BRENDA" id="4.6.1.1">
    <property type="organism ID" value="3474"/>
</dbReference>
<dbReference type="Reactome" id="R-MMU-163615">
    <property type="pathway name" value="PKA activation"/>
</dbReference>
<dbReference type="Reactome" id="R-MMU-170660">
    <property type="pathway name" value="Adenylate cyclase activating pathway"/>
</dbReference>
<dbReference type="Reactome" id="R-MMU-170670">
    <property type="pathway name" value="Adenylate cyclase inhibitory pathway"/>
</dbReference>
<dbReference type="Reactome" id="R-MMU-418597">
    <property type="pathway name" value="G alpha (z) signalling events"/>
</dbReference>
<dbReference type="Reactome" id="R-MMU-5610787">
    <property type="pathway name" value="Hedgehog 'off' state"/>
</dbReference>
<dbReference type="ChiTaRS" id="Adcy2">
    <property type="organism name" value="mouse"/>
</dbReference>
<dbReference type="PRO" id="PR:Q80TL1"/>
<dbReference type="Proteomes" id="UP000000589">
    <property type="component" value="Unplaced"/>
</dbReference>
<dbReference type="RNAct" id="Q80TL1">
    <property type="molecule type" value="protein"/>
</dbReference>
<dbReference type="GO" id="GO:0005737">
    <property type="term" value="C:cytoplasm"/>
    <property type="evidence" value="ECO:0007669"/>
    <property type="project" value="UniProtKB-SubCell"/>
</dbReference>
<dbReference type="GO" id="GO:0030425">
    <property type="term" value="C:dendrite"/>
    <property type="evidence" value="ECO:0000314"/>
    <property type="project" value="MGI"/>
</dbReference>
<dbReference type="GO" id="GO:0016020">
    <property type="term" value="C:membrane"/>
    <property type="evidence" value="ECO:0000314"/>
    <property type="project" value="MGI"/>
</dbReference>
<dbReference type="GO" id="GO:0005886">
    <property type="term" value="C:plasma membrane"/>
    <property type="evidence" value="ECO:0000314"/>
    <property type="project" value="BHF-UCL"/>
</dbReference>
<dbReference type="GO" id="GO:0004016">
    <property type="term" value="F:adenylate cyclase activity"/>
    <property type="evidence" value="ECO:0000250"/>
    <property type="project" value="UniProtKB"/>
</dbReference>
<dbReference type="GO" id="GO:0008179">
    <property type="term" value="F:adenylate cyclase binding"/>
    <property type="evidence" value="ECO:0000353"/>
    <property type="project" value="BHF-UCL"/>
</dbReference>
<dbReference type="GO" id="GO:0005524">
    <property type="term" value="F:ATP binding"/>
    <property type="evidence" value="ECO:0007669"/>
    <property type="project" value="UniProtKB-KW"/>
</dbReference>
<dbReference type="GO" id="GO:0000287">
    <property type="term" value="F:magnesium ion binding"/>
    <property type="evidence" value="ECO:0000250"/>
    <property type="project" value="UniProtKB"/>
</dbReference>
<dbReference type="GO" id="GO:0030145">
    <property type="term" value="F:manganese ion binding"/>
    <property type="evidence" value="ECO:0000250"/>
    <property type="project" value="UniProtKB"/>
</dbReference>
<dbReference type="GO" id="GO:0007189">
    <property type="term" value="P:adenylate cyclase-activating G protein-coupled receptor signaling pathway"/>
    <property type="evidence" value="ECO:0000250"/>
    <property type="project" value="UniProtKB"/>
</dbReference>
<dbReference type="GO" id="GO:0007188">
    <property type="term" value="P:adenylate cyclase-modulating G protein-coupled receptor signaling pathway"/>
    <property type="evidence" value="ECO:0000304"/>
    <property type="project" value="MGI"/>
</dbReference>
<dbReference type="GO" id="GO:0006171">
    <property type="term" value="P:cAMP biosynthetic process"/>
    <property type="evidence" value="ECO:0000250"/>
    <property type="project" value="UniProtKB"/>
</dbReference>
<dbReference type="GO" id="GO:1904322">
    <property type="term" value="P:cellular response to forskolin"/>
    <property type="evidence" value="ECO:0000250"/>
    <property type="project" value="UniProtKB"/>
</dbReference>
<dbReference type="GO" id="GO:0035556">
    <property type="term" value="P:intracellular signal transduction"/>
    <property type="evidence" value="ECO:0007669"/>
    <property type="project" value="InterPro"/>
</dbReference>
<dbReference type="CDD" id="cd07302">
    <property type="entry name" value="CHD"/>
    <property type="match status" value="2"/>
</dbReference>
<dbReference type="FunFam" id="3.30.70.1230:FF:000003">
    <property type="entry name" value="Adenylate cyclase"/>
    <property type="match status" value="1"/>
</dbReference>
<dbReference type="FunFam" id="3.30.70.1230:FF:000010">
    <property type="entry name" value="Adenylate cyclase 2"/>
    <property type="match status" value="1"/>
</dbReference>
<dbReference type="Gene3D" id="3.30.70.1230">
    <property type="entry name" value="Nucleotide cyclase"/>
    <property type="match status" value="2"/>
</dbReference>
<dbReference type="InterPro" id="IPR001054">
    <property type="entry name" value="A/G_cyclase"/>
</dbReference>
<dbReference type="InterPro" id="IPR018297">
    <property type="entry name" value="A/G_cyclase_CS"/>
</dbReference>
<dbReference type="InterPro" id="IPR032628">
    <property type="entry name" value="AC_N"/>
</dbReference>
<dbReference type="InterPro" id="IPR030672">
    <property type="entry name" value="Adcy"/>
</dbReference>
<dbReference type="InterPro" id="IPR009398">
    <property type="entry name" value="Adcy_conserved_dom"/>
</dbReference>
<dbReference type="InterPro" id="IPR029787">
    <property type="entry name" value="Nucleotide_cyclase"/>
</dbReference>
<dbReference type="PANTHER" id="PTHR45627">
    <property type="entry name" value="ADENYLATE CYCLASE TYPE 1"/>
    <property type="match status" value="1"/>
</dbReference>
<dbReference type="PANTHER" id="PTHR45627:SF6">
    <property type="entry name" value="ADENYLATE CYCLASE TYPE 2"/>
    <property type="match status" value="1"/>
</dbReference>
<dbReference type="Pfam" id="PF16214">
    <property type="entry name" value="AC_N"/>
    <property type="match status" value="1"/>
</dbReference>
<dbReference type="Pfam" id="PF06327">
    <property type="entry name" value="Adcy_cons_dom"/>
    <property type="match status" value="1"/>
</dbReference>
<dbReference type="Pfam" id="PF00211">
    <property type="entry name" value="Guanylate_cyc"/>
    <property type="match status" value="2"/>
</dbReference>
<dbReference type="PIRSF" id="PIRSF039050">
    <property type="entry name" value="Ade_cyc"/>
    <property type="match status" value="1"/>
</dbReference>
<dbReference type="SMART" id="SM00044">
    <property type="entry name" value="CYCc"/>
    <property type="match status" value="2"/>
</dbReference>
<dbReference type="SUPFAM" id="SSF55073">
    <property type="entry name" value="Nucleotide cyclase"/>
    <property type="match status" value="2"/>
</dbReference>
<dbReference type="PROSITE" id="PS00452">
    <property type="entry name" value="GUANYLATE_CYCLASE_1"/>
    <property type="match status" value="2"/>
</dbReference>
<dbReference type="PROSITE" id="PS50125">
    <property type="entry name" value="GUANYLATE_CYCLASE_2"/>
    <property type="match status" value="2"/>
</dbReference>